<gene>
    <name evidence="1" type="primary">glnS1</name>
    <name type="ordered locus">NE2356</name>
</gene>
<gene>
    <name evidence="1" type="primary">glnS2</name>
    <name type="ordered locus">NE2363</name>
</gene>
<protein>
    <recommendedName>
        <fullName evidence="1">Glutamine--tRNA ligase</fullName>
        <ecNumber evidence="1">6.1.1.18</ecNumber>
    </recommendedName>
    <alternativeName>
        <fullName evidence="1">Glutaminyl-tRNA synthetase</fullName>
        <shortName evidence="1">GlnRS</shortName>
    </alternativeName>
</protein>
<evidence type="ECO:0000255" key="1">
    <source>
        <dbReference type="HAMAP-Rule" id="MF_00126"/>
    </source>
</evidence>
<feature type="chain" id="PRO_0000195840" description="Glutamine--tRNA ligase">
    <location>
        <begin position="1"/>
        <end position="556"/>
    </location>
</feature>
<feature type="short sequence motif" description="'HIGH' region" evidence="1">
    <location>
        <begin position="34"/>
        <end position="44"/>
    </location>
</feature>
<feature type="short sequence motif" description="'KMSKS' region" evidence="1">
    <location>
        <begin position="270"/>
        <end position="274"/>
    </location>
</feature>
<feature type="binding site" evidence="1">
    <location>
        <begin position="35"/>
        <end position="37"/>
    </location>
    <ligand>
        <name>ATP</name>
        <dbReference type="ChEBI" id="CHEBI:30616"/>
    </ligand>
</feature>
<feature type="binding site" evidence="1">
    <location>
        <begin position="41"/>
        <end position="47"/>
    </location>
    <ligand>
        <name>ATP</name>
        <dbReference type="ChEBI" id="CHEBI:30616"/>
    </ligand>
</feature>
<feature type="binding site" evidence="1">
    <location>
        <position position="67"/>
    </location>
    <ligand>
        <name>L-glutamine</name>
        <dbReference type="ChEBI" id="CHEBI:58359"/>
    </ligand>
</feature>
<feature type="binding site" evidence="1">
    <location>
        <position position="212"/>
    </location>
    <ligand>
        <name>L-glutamine</name>
        <dbReference type="ChEBI" id="CHEBI:58359"/>
    </ligand>
</feature>
<feature type="binding site" evidence="1">
    <location>
        <position position="231"/>
    </location>
    <ligand>
        <name>ATP</name>
        <dbReference type="ChEBI" id="CHEBI:30616"/>
    </ligand>
</feature>
<feature type="binding site" evidence="1">
    <location>
        <begin position="263"/>
        <end position="264"/>
    </location>
    <ligand>
        <name>ATP</name>
        <dbReference type="ChEBI" id="CHEBI:30616"/>
    </ligand>
</feature>
<feature type="binding site" evidence="1">
    <location>
        <begin position="271"/>
        <end position="273"/>
    </location>
    <ligand>
        <name>ATP</name>
        <dbReference type="ChEBI" id="CHEBI:30616"/>
    </ligand>
</feature>
<sequence length="556" mass="64605">MNTPSSPAHFIRNIIEEDNRTGKWNGRVETRFPPEPNGYLHIGHAKSICLNFGLALEYGGVCHLRFDDTNPEKEAQEYVDAIIESVRWLGFDWKEHLYYASDYFDQLYEFAEYLITQGKAYVDSLSADEIRRLRGTLTEAGTNSPYRDRSAEENLDLFRRMRAGEFPDGVHVLRARIDMASPNINLRDPVIYRIRHIHHQRTGDKWCIYPMYDYTHCISDALERITHSLCTLEFEDHRPLYDWVLDQLAEKIPCHPQQIEFARLNLTYSVMSKRKLIDLVENKLVDGWNDPRMNTLAGLRRRGYTPESIRLFAERIGISKADSWIDMTILEDCLREDLNERALRRIAVLDPVSLIIDNFPDGHEETCYAPNHPQKPELGTRELRLTKQLYIDREDFMEIPNKGFFRLAPGAEVRLRYAFIIKCTHVVKDDQGKILEIHCVYDPDTKSGTAGAETRKVRGNIHWLSATYAKAVEIRLYDRLFIDSHPDTEGKDFKISLNPNSKEVITGYVEPSLCEAQPEQRFQFERHGYFVADLADTGPGKPIFNRTVSLRNTWKK</sequence>
<dbReference type="EC" id="6.1.1.18" evidence="1"/>
<dbReference type="EMBL" id="AL954747">
    <property type="protein sequence ID" value="CAD86268.1"/>
    <property type="molecule type" value="Genomic_DNA"/>
</dbReference>
<dbReference type="EMBL" id="AL954747">
    <property type="protein sequence ID" value="CAD86275.1"/>
    <property type="molecule type" value="Genomic_DNA"/>
</dbReference>
<dbReference type="RefSeq" id="WP_011112836.1">
    <property type="nucleotide sequence ID" value="NC_004757.1"/>
</dbReference>
<dbReference type="SMR" id="Q81ZS7"/>
<dbReference type="STRING" id="228410.NE2356"/>
<dbReference type="GeneID" id="87105494"/>
<dbReference type="KEGG" id="neu:NE2356"/>
<dbReference type="KEGG" id="neu:NE2363"/>
<dbReference type="eggNOG" id="COG0008">
    <property type="taxonomic scope" value="Bacteria"/>
</dbReference>
<dbReference type="HOGENOM" id="CLU_001882_2_3_4"/>
<dbReference type="OrthoDB" id="9801560at2"/>
<dbReference type="PhylomeDB" id="Q81ZS7"/>
<dbReference type="Proteomes" id="UP000001416">
    <property type="component" value="Chromosome"/>
</dbReference>
<dbReference type="GO" id="GO:0005829">
    <property type="term" value="C:cytosol"/>
    <property type="evidence" value="ECO:0007669"/>
    <property type="project" value="TreeGrafter"/>
</dbReference>
<dbReference type="GO" id="GO:0005524">
    <property type="term" value="F:ATP binding"/>
    <property type="evidence" value="ECO:0007669"/>
    <property type="project" value="UniProtKB-UniRule"/>
</dbReference>
<dbReference type="GO" id="GO:0004819">
    <property type="term" value="F:glutamine-tRNA ligase activity"/>
    <property type="evidence" value="ECO:0007669"/>
    <property type="project" value="UniProtKB-UniRule"/>
</dbReference>
<dbReference type="GO" id="GO:0006425">
    <property type="term" value="P:glutaminyl-tRNA aminoacylation"/>
    <property type="evidence" value="ECO:0007669"/>
    <property type="project" value="InterPro"/>
</dbReference>
<dbReference type="GO" id="GO:0006424">
    <property type="term" value="P:glutamyl-tRNA aminoacylation"/>
    <property type="evidence" value="ECO:0007669"/>
    <property type="project" value="UniProtKB-UniRule"/>
</dbReference>
<dbReference type="CDD" id="cd00807">
    <property type="entry name" value="GlnRS_core"/>
    <property type="match status" value="1"/>
</dbReference>
<dbReference type="FunFam" id="2.40.240.10:FF:000007">
    <property type="entry name" value="Glutamine--tRNA ligase"/>
    <property type="match status" value="1"/>
</dbReference>
<dbReference type="FunFam" id="3.40.50.620:FF:000037">
    <property type="entry name" value="Glutamine--tRNA ligase cytoplasmic"/>
    <property type="match status" value="1"/>
</dbReference>
<dbReference type="Gene3D" id="3.40.50.620">
    <property type="entry name" value="HUPs"/>
    <property type="match status" value="1"/>
</dbReference>
<dbReference type="Gene3D" id="2.40.240.10">
    <property type="entry name" value="Ribosomal Protein L25, Chain P"/>
    <property type="match status" value="2"/>
</dbReference>
<dbReference type="HAMAP" id="MF_00126">
    <property type="entry name" value="Gln_tRNA_synth"/>
    <property type="match status" value="1"/>
</dbReference>
<dbReference type="InterPro" id="IPR004514">
    <property type="entry name" value="Gln-tRNA-synth"/>
</dbReference>
<dbReference type="InterPro" id="IPR050132">
    <property type="entry name" value="Gln/Glu-tRNA_Ligase"/>
</dbReference>
<dbReference type="InterPro" id="IPR022861">
    <property type="entry name" value="Gln_tRNA_ligase_bac"/>
</dbReference>
<dbReference type="InterPro" id="IPR000924">
    <property type="entry name" value="Glu/Gln-tRNA-synth"/>
</dbReference>
<dbReference type="InterPro" id="IPR020058">
    <property type="entry name" value="Glu/Gln-tRNA-synth_Ib_cat-dom"/>
</dbReference>
<dbReference type="InterPro" id="IPR020059">
    <property type="entry name" value="Glu/Gln-tRNA-synth_Ib_codon-bd"/>
</dbReference>
<dbReference type="InterPro" id="IPR020056">
    <property type="entry name" value="Rbsml_bL25/Gln-tRNA_synth_N"/>
</dbReference>
<dbReference type="InterPro" id="IPR011035">
    <property type="entry name" value="Ribosomal_bL25/Gln-tRNA_synth"/>
</dbReference>
<dbReference type="InterPro" id="IPR014729">
    <property type="entry name" value="Rossmann-like_a/b/a_fold"/>
</dbReference>
<dbReference type="InterPro" id="IPR049437">
    <property type="entry name" value="tRNA-synt_1c_C2"/>
</dbReference>
<dbReference type="NCBIfam" id="TIGR00440">
    <property type="entry name" value="glnS"/>
    <property type="match status" value="1"/>
</dbReference>
<dbReference type="NCBIfam" id="NF011291">
    <property type="entry name" value="PRK14703.1"/>
    <property type="match status" value="1"/>
</dbReference>
<dbReference type="PANTHER" id="PTHR43097:SF5">
    <property type="entry name" value="GLUTAMATE--TRNA LIGASE"/>
    <property type="match status" value="1"/>
</dbReference>
<dbReference type="PANTHER" id="PTHR43097">
    <property type="entry name" value="GLUTAMINE-TRNA LIGASE"/>
    <property type="match status" value="1"/>
</dbReference>
<dbReference type="Pfam" id="PF00749">
    <property type="entry name" value="tRNA-synt_1c"/>
    <property type="match status" value="1"/>
</dbReference>
<dbReference type="Pfam" id="PF03950">
    <property type="entry name" value="tRNA-synt_1c_C"/>
    <property type="match status" value="1"/>
</dbReference>
<dbReference type="Pfam" id="PF20974">
    <property type="entry name" value="tRNA-synt_1c_C2"/>
    <property type="match status" value="1"/>
</dbReference>
<dbReference type="PRINTS" id="PR00987">
    <property type="entry name" value="TRNASYNTHGLU"/>
</dbReference>
<dbReference type="SUPFAM" id="SSF52374">
    <property type="entry name" value="Nucleotidylyl transferase"/>
    <property type="match status" value="1"/>
</dbReference>
<dbReference type="SUPFAM" id="SSF50715">
    <property type="entry name" value="Ribosomal protein L25-like"/>
    <property type="match status" value="1"/>
</dbReference>
<dbReference type="PROSITE" id="PS00178">
    <property type="entry name" value="AA_TRNA_LIGASE_I"/>
    <property type="match status" value="1"/>
</dbReference>
<organism>
    <name type="scientific">Nitrosomonas europaea (strain ATCC 19718 / CIP 103999 / KCTC 2705 / NBRC 14298)</name>
    <dbReference type="NCBI Taxonomy" id="228410"/>
    <lineage>
        <taxon>Bacteria</taxon>
        <taxon>Pseudomonadati</taxon>
        <taxon>Pseudomonadota</taxon>
        <taxon>Betaproteobacteria</taxon>
        <taxon>Nitrosomonadales</taxon>
        <taxon>Nitrosomonadaceae</taxon>
        <taxon>Nitrosomonas</taxon>
    </lineage>
</organism>
<accession>Q81ZS7</accession>
<reference key="1">
    <citation type="journal article" date="2003" name="J. Bacteriol.">
        <title>Complete genome sequence of the ammonia-oxidizing bacterium and obligate chemolithoautotroph Nitrosomonas europaea.</title>
        <authorList>
            <person name="Chain P."/>
            <person name="Lamerdin J.E."/>
            <person name="Larimer F.W."/>
            <person name="Regala W."/>
            <person name="Lao V."/>
            <person name="Land M.L."/>
            <person name="Hauser L."/>
            <person name="Hooper A.B."/>
            <person name="Klotz M.G."/>
            <person name="Norton J."/>
            <person name="Sayavedra-Soto L.A."/>
            <person name="Arciero D.M."/>
            <person name="Hommes N.G."/>
            <person name="Whittaker M.M."/>
            <person name="Arp D.J."/>
        </authorList>
    </citation>
    <scope>NUCLEOTIDE SEQUENCE [LARGE SCALE GENOMIC DNA]</scope>
    <source>
        <strain>ATCC 19718 / CIP 103999 / KCTC 2705 / NBRC 14298</strain>
    </source>
</reference>
<proteinExistence type="inferred from homology"/>
<comment type="catalytic activity">
    <reaction evidence="1">
        <text>tRNA(Gln) + L-glutamine + ATP = L-glutaminyl-tRNA(Gln) + AMP + diphosphate</text>
        <dbReference type="Rhea" id="RHEA:20121"/>
        <dbReference type="Rhea" id="RHEA-COMP:9662"/>
        <dbReference type="Rhea" id="RHEA-COMP:9681"/>
        <dbReference type="ChEBI" id="CHEBI:30616"/>
        <dbReference type="ChEBI" id="CHEBI:33019"/>
        <dbReference type="ChEBI" id="CHEBI:58359"/>
        <dbReference type="ChEBI" id="CHEBI:78442"/>
        <dbReference type="ChEBI" id="CHEBI:78521"/>
        <dbReference type="ChEBI" id="CHEBI:456215"/>
        <dbReference type="EC" id="6.1.1.18"/>
    </reaction>
</comment>
<comment type="subunit">
    <text evidence="1">Monomer.</text>
</comment>
<comment type="subcellular location">
    <subcellularLocation>
        <location evidence="1">Cytoplasm</location>
    </subcellularLocation>
</comment>
<comment type="similarity">
    <text evidence="1">Belongs to the class-I aminoacyl-tRNA synthetase family.</text>
</comment>
<name>SYQ_NITEU</name>
<keyword id="KW-0030">Aminoacyl-tRNA synthetase</keyword>
<keyword id="KW-0067">ATP-binding</keyword>
<keyword id="KW-0963">Cytoplasm</keyword>
<keyword id="KW-0436">Ligase</keyword>
<keyword id="KW-0547">Nucleotide-binding</keyword>
<keyword id="KW-0648">Protein biosynthesis</keyword>
<keyword id="KW-1185">Reference proteome</keyword>